<name>Y1438_METS3</name>
<proteinExistence type="inferred from homology"/>
<accession>A5UN65</accession>
<reference key="1">
    <citation type="journal article" date="2007" name="Proc. Natl. Acad. Sci. U.S.A.">
        <title>Genomic and metabolic adaptations of Methanobrevibacter smithii to the human gut.</title>
        <authorList>
            <person name="Samuel B.S."/>
            <person name="Hansen E.E."/>
            <person name="Manchester J.K."/>
            <person name="Coutinho P.M."/>
            <person name="Henrissat B."/>
            <person name="Fulton R."/>
            <person name="Latreille P."/>
            <person name="Kim K."/>
            <person name="Wilson R.K."/>
            <person name="Gordon J.I."/>
        </authorList>
    </citation>
    <scope>NUCLEOTIDE SEQUENCE [LARGE SCALE GENOMIC DNA]</scope>
    <source>
        <strain>ATCC 35061 / DSM 861 / OCM 144 / PS</strain>
    </source>
</reference>
<gene>
    <name type="ordered locus">Msm_1438</name>
</gene>
<evidence type="ECO:0000255" key="1">
    <source>
        <dbReference type="HAMAP-Rule" id="MF_00055"/>
    </source>
</evidence>
<organism>
    <name type="scientific">Methanobrevibacter smithii (strain ATCC 35061 / DSM 861 / OCM 144 / PS)</name>
    <dbReference type="NCBI Taxonomy" id="420247"/>
    <lineage>
        <taxon>Archaea</taxon>
        <taxon>Methanobacteriati</taxon>
        <taxon>Methanobacteriota</taxon>
        <taxon>Methanomada group</taxon>
        <taxon>Methanobacteria</taxon>
        <taxon>Methanobacteriales</taxon>
        <taxon>Methanobacteriaceae</taxon>
        <taxon>Methanobrevibacter</taxon>
    </lineage>
</organism>
<protein>
    <recommendedName>
        <fullName evidence="1">MEMO1 family protein Msm_1438</fullName>
    </recommendedName>
</protein>
<sequence length="282" mass="30896">MLRKPAVAGMFYPDDSEELVKTIEDCFLHSFGPGKIPDIESFEGNDYPVNVMVPHAGFQYSGTIAAHSYCELAKNGFPEVFIIIGPNHTGLGSEVSVFNKGEWITPLGNIQVDEEFADTLISFSDFASADFAAHMREHSIEVQLPFLQYFSNDFKIVPVVLGSQTISAANDLAAAILKAGEKLDKSYCVIASSDLSHFNTQERANKVDGFVLEDIENMDEFKLLEEIIQYNITMCGYGPVMTTMILSKMCGKNTSEILAYKTSGDISGDLSSVVGYASGIFK</sequence>
<feature type="chain" id="PRO_1000071151" description="MEMO1 family protein Msm_1438">
    <location>
        <begin position="1"/>
        <end position="282"/>
    </location>
</feature>
<dbReference type="EMBL" id="CP000678">
    <property type="protein sequence ID" value="ABQ87643.1"/>
    <property type="molecule type" value="Genomic_DNA"/>
</dbReference>
<dbReference type="SMR" id="A5UN65"/>
<dbReference type="STRING" id="420247.Msm_1438"/>
<dbReference type="EnsemblBacteria" id="ABQ87643">
    <property type="protein sequence ID" value="ABQ87643"/>
    <property type="gene ID" value="Msm_1438"/>
</dbReference>
<dbReference type="KEGG" id="msi:Msm_1438"/>
<dbReference type="PATRIC" id="fig|420247.28.peg.1431"/>
<dbReference type="eggNOG" id="arCOG01728">
    <property type="taxonomic scope" value="Archaea"/>
</dbReference>
<dbReference type="HOGENOM" id="CLU_038085_2_0_2"/>
<dbReference type="BioCyc" id="MSMI420247:GHWZ-1476-MONOMER"/>
<dbReference type="Proteomes" id="UP000001992">
    <property type="component" value="Chromosome"/>
</dbReference>
<dbReference type="CDD" id="cd07361">
    <property type="entry name" value="MEMO_like"/>
    <property type="match status" value="1"/>
</dbReference>
<dbReference type="Gene3D" id="3.40.830.10">
    <property type="entry name" value="LigB-like"/>
    <property type="match status" value="1"/>
</dbReference>
<dbReference type="HAMAP" id="MF_00055">
    <property type="entry name" value="MEMO1"/>
    <property type="match status" value="1"/>
</dbReference>
<dbReference type="InterPro" id="IPR002737">
    <property type="entry name" value="MEMO1_fam"/>
</dbReference>
<dbReference type="NCBIfam" id="TIGR04336">
    <property type="entry name" value="AmmeMemoSam_B"/>
    <property type="match status" value="1"/>
</dbReference>
<dbReference type="NCBIfam" id="NF001987">
    <property type="entry name" value="PRK00782.1"/>
    <property type="match status" value="1"/>
</dbReference>
<dbReference type="PANTHER" id="PTHR11060">
    <property type="entry name" value="PROTEIN MEMO1"/>
    <property type="match status" value="1"/>
</dbReference>
<dbReference type="PANTHER" id="PTHR11060:SF0">
    <property type="entry name" value="PROTEIN MEMO1"/>
    <property type="match status" value="1"/>
</dbReference>
<dbReference type="Pfam" id="PF01875">
    <property type="entry name" value="Memo"/>
    <property type="match status" value="1"/>
</dbReference>
<comment type="similarity">
    <text evidence="1">Belongs to the MEMO1 family.</text>
</comment>